<keyword id="KW-0227">DNA damage</keyword>
<keyword id="KW-0234">DNA repair</keyword>
<keyword id="KW-0378">Hydrolase</keyword>
<keyword id="KW-1185">Reference proteome</keyword>
<dbReference type="EC" id="3.2.2.-" evidence="1"/>
<dbReference type="EMBL" id="AP006618">
    <property type="protein sequence ID" value="BAD56836.1"/>
    <property type="molecule type" value="Genomic_DNA"/>
</dbReference>
<dbReference type="RefSeq" id="WP_011208521.1">
    <property type="nucleotide sequence ID" value="NC_006361.1"/>
</dbReference>
<dbReference type="SMR" id="Q5YYA5"/>
<dbReference type="STRING" id="247156.NFA_19900"/>
<dbReference type="GeneID" id="61132768"/>
<dbReference type="KEGG" id="nfa:NFA_19900"/>
<dbReference type="eggNOG" id="COG2094">
    <property type="taxonomic scope" value="Bacteria"/>
</dbReference>
<dbReference type="HOGENOM" id="CLU_060471_3_1_11"/>
<dbReference type="OrthoDB" id="9794313at2"/>
<dbReference type="Proteomes" id="UP000006820">
    <property type="component" value="Chromosome"/>
</dbReference>
<dbReference type="GO" id="GO:0003905">
    <property type="term" value="F:alkylbase DNA N-glycosylase activity"/>
    <property type="evidence" value="ECO:0007669"/>
    <property type="project" value="InterPro"/>
</dbReference>
<dbReference type="GO" id="GO:0003677">
    <property type="term" value="F:DNA binding"/>
    <property type="evidence" value="ECO:0007669"/>
    <property type="project" value="InterPro"/>
</dbReference>
<dbReference type="GO" id="GO:0006284">
    <property type="term" value="P:base-excision repair"/>
    <property type="evidence" value="ECO:0007669"/>
    <property type="project" value="InterPro"/>
</dbReference>
<dbReference type="CDD" id="cd00540">
    <property type="entry name" value="AAG"/>
    <property type="match status" value="1"/>
</dbReference>
<dbReference type="Gene3D" id="3.10.300.10">
    <property type="entry name" value="Methylpurine-DNA glycosylase (MPG)"/>
    <property type="match status" value="1"/>
</dbReference>
<dbReference type="HAMAP" id="MF_00527">
    <property type="entry name" value="3MGH"/>
    <property type="match status" value="1"/>
</dbReference>
<dbReference type="InterPro" id="IPR011034">
    <property type="entry name" value="Formyl_transferase-like_C_sf"/>
</dbReference>
<dbReference type="InterPro" id="IPR003180">
    <property type="entry name" value="MPG"/>
</dbReference>
<dbReference type="InterPro" id="IPR036995">
    <property type="entry name" value="MPG_sf"/>
</dbReference>
<dbReference type="NCBIfam" id="TIGR00567">
    <property type="entry name" value="3mg"/>
    <property type="match status" value="1"/>
</dbReference>
<dbReference type="NCBIfam" id="NF002003">
    <property type="entry name" value="PRK00802.1-3"/>
    <property type="match status" value="1"/>
</dbReference>
<dbReference type="PANTHER" id="PTHR10429">
    <property type="entry name" value="DNA-3-METHYLADENINE GLYCOSYLASE"/>
    <property type="match status" value="1"/>
</dbReference>
<dbReference type="PANTHER" id="PTHR10429:SF0">
    <property type="entry name" value="DNA-3-METHYLADENINE GLYCOSYLASE"/>
    <property type="match status" value="1"/>
</dbReference>
<dbReference type="Pfam" id="PF02245">
    <property type="entry name" value="Pur_DNA_glyco"/>
    <property type="match status" value="1"/>
</dbReference>
<dbReference type="SUPFAM" id="SSF50486">
    <property type="entry name" value="FMT C-terminal domain-like"/>
    <property type="match status" value="1"/>
</dbReference>
<evidence type="ECO:0000255" key="1">
    <source>
        <dbReference type="HAMAP-Rule" id="MF_00527"/>
    </source>
</evidence>
<protein>
    <recommendedName>
        <fullName evidence="1">Putative 3-methyladenine DNA glycosylase</fullName>
        <ecNumber evidence="1">3.2.2.-</ecNumber>
    </recommendedName>
</protein>
<accession>Q5YYA5</accession>
<name>3MGH_NOCFA</name>
<gene>
    <name type="ordered locus">NFA_19900</name>
</gene>
<proteinExistence type="inferred from homology"/>
<feature type="chain" id="PRO_0000265042" description="Putative 3-methyladenine DNA glycosylase">
    <location>
        <begin position="1"/>
        <end position="212"/>
    </location>
</feature>
<reference key="1">
    <citation type="journal article" date="2004" name="Proc. Natl. Acad. Sci. U.S.A.">
        <title>The complete genomic sequence of Nocardia farcinica IFM 10152.</title>
        <authorList>
            <person name="Ishikawa J."/>
            <person name="Yamashita A."/>
            <person name="Mikami Y."/>
            <person name="Hoshino Y."/>
            <person name="Kurita H."/>
            <person name="Hotta K."/>
            <person name="Shiba T."/>
            <person name="Hattori M."/>
        </authorList>
    </citation>
    <scope>NUCLEOTIDE SEQUENCE [LARGE SCALE GENOMIC DNA]</scope>
    <source>
        <strain>IFM 10152</strain>
    </source>
</reference>
<organism>
    <name type="scientific">Nocardia farcinica (strain IFM 10152)</name>
    <dbReference type="NCBI Taxonomy" id="247156"/>
    <lineage>
        <taxon>Bacteria</taxon>
        <taxon>Bacillati</taxon>
        <taxon>Actinomycetota</taxon>
        <taxon>Actinomycetes</taxon>
        <taxon>Mycobacteriales</taxon>
        <taxon>Nocardiaceae</taxon>
        <taxon>Nocardia</taxon>
    </lineage>
</organism>
<sequence>MAVVSVEELVVDPPTAARRLLGATLRSGQVAVRLVEVEAYGGDAEGPWPDPASHSGRGRTKRNAVMFGPAGYLYVYLSYGMHTCVNVTTGPDGTAGAVLLRAGEVVDGLDVVRGRRPTARTDADLARGPGNFGTALGIALDDYGTALFDPAAPIRLELADPLPAALIADGPRVGVSSEADRPWRFWLPSSPAVSAYRRSPRAPGAATVRAPR</sequence>
<comment type="similarity">
    <text evidence="1">Belongs to the DNA glycosylase MPG family.</text>
</comment>